<accession>Q6MGM8</accession>
<name>ATPE_BDEBA</name>
<comment type="function">
    <text evidence="1">Produces ATP from ADP in the presence of a proton gradient across the membrane.</text>
</comment>
<comment type="subunit">
    <text>F-type ATPases have 2 components, CF(1) - the catalytic core - and CF(0) - the membrane proton channel. CF(1) has five subunits: alpha(3), beta(3), gamma(1), delta(1), epsilon(1). CF(0) has three main subunits: a, b and c.</text>
</comment>
<comment type="subcellular location">
    <subcellularLocation>
        <location evidence="1">Cell inner membrane</location>
        <topology evidence="1">Peripheral membrane protein</topology>
    </subcellularLocation>
</comment>
<comment type="similarity">
    <text evidence="1">Belongs to the ATPase epsilon chain family.</text>
</comment>
<reference key="1">
    <citation type="journal article" date="2004" name="Science">
        <title>A predator unmasked: life cycle of Bdellovibrio bacteriovorus from a genomic perspective.</title>
        <authorList>
            <person name="Rendulic S."/>
            <person name="Jagtap P."/>
            <person name="Rosinus A."/>
            <person name="Eppinger M."/>
            <person name="Baar C."/>
            <person name="Lanz C."/>
            <person name="Keller H."/>
            <person name="Lambert C."/>
            <person name="Evans K.J."/>
            <person name="Goesmann A."/>
            <person name="Meyer F."/>
            <person name="Sockett R.E."/>
            <person name="Schuster S.C."/>
        </authorList>
    </citation>
    <scope>NUCLEOTIDE SEQUENCE [LARGE SCALE GENOMIC DNA]</scope>
    <source>
        <strain>ATCC 15356 / DSM 50701 / NCIMB 9529 / HD100</strain>
    </source>
</reference>
<evidence type="ECO:0000255" key="1">
    <source>
        <dbReference type="HAMAP-Rule" id="MF_00530"/>
    </source>
</evidence>
<dbReference type="EMBL" id="BX842656">
    <property type="protein sequence ID" value="CAE81251.1"/>
    <property type="molecule type" value="Genomic_DNA"/>
</dbReference>
<dbReference type="SMR" id="Q6MGM8"/>
<dbReference type="STRING" id="264462.Bd3896"/>
<dbReference type="KEGG" id="bba:Bd3896"/>
<dbReference type="eggNOG" id="COG0355">
    <property type="taxonomic scope" value="Bacteria"/>
</dbReference>
<dbReference type="HOGENOM" id="CLU_084338_2_1_7"/>
<dbReference type="Proteomes" id="UP000008080">
    <property type="component" value="Chromosome"/>
</dbReference>
<dbReference type="GO" id="GO:0005886">
    <property type="term" value="C:plasma membrane"/>
    <property type="evidence" value="ECO:0007669"/>
    <property type="project" value="UniProtKB-SubCell"/>
</dbReference>
<dbReference type="GO" id="GO:0045259">
    <property type="term" value="C:proton-transporting ATP synthase complex"/>
    <property type="evidence" value="ECO:0007669"/>
    <property type="project" value="UniProtKB-KW"/>
</dbReference>
<dbReference type="GO" id="GO:0005524">
    <property type="term" value="F:ATP binding"/>
    <property type="evidence" value="ECO:0007669"/>
    <property type="project" value="UniProtKB-UniRule"/>
</dbReference>
<dbReference type="GO" id="GO:0046933">
    <property type="term" value="F:proton-transporting ATP synthase activity, rotational mechanism"/>
    <property type="evidence" value="ECO:0007669"/>
    <property type="project" value="UniProtKB-UniRule"/>
</dbReference>
<dbReference type="CDD" id="cd12152">
    <property type="entry name" value="F1-ATPase_delta"/>
    <property type="match status" value="1"/>
</dbReference>
<dbReference type="Gene3D" id="2.60.15.10">
    <property type="entry name" value="F0F1 ATP synthase delta/epsilon subunit, N-terminal"/>
    <property type="match status" value="1"/>
</dbReference>
<dbReference type="HAMAP" id="MF_00530">
    <property type="entry name" value="ATP_synth_epsil_bac"/>
    <property type="match status" value="1"/>
</dbReference>
<dbReference type="InterPro" id="IPR001469">
    <property type="entry name" value="ATP_synth_F1_dsu/esu"/>
</dbReference>
<dbReference type="InterPro" id="IPR020546">
    <property type="entry name" value="ATP_synth_F1_dsu/esu_N"/>
</dbReference>
<dbReference type="InterPro" id="IPR036771">
    <property type="entry name" value="ATPsynth_dsu/esu_N"/>
</dbReference>
<dbReference type="NCBIfam" id="TIGR01216">
    <property type="entry name" value="ATP_synt_epsi"/>
    <property type="match status" value="1"/>
</dbReference>
<dbReference type="PANTHER" id="PTHR13822">
    <property type="entry name" value="ATP SYNTHASE DELTA/EPSILON CHAIN"/>
    <property type="match status" value="1"/>
</dbReference>
<dbReference type="PANTHER" id="PTHR13822:SF10">
    <property type="entry name" value="ATP SYNTHASE EPSILON CHAIN, CHLOROPLASTIC"/>
    <property type="match status" value="1"/>
</dbReference>
<dbReference type="Pfam" id="PF02823">
    <property type="entry name" value="ATP-synt_DE_N"/>
    <property type="match status" value="1"/>
</dbReference>
<dbReference type="SUPFAM" id="SSF51344">
    <property type="entry name" value="Epsilon subunit of F1F0-ATP synthase N-terminal domain"/>
    <property type="match status" value="1"/>
</dbReference>
<proteinExistence type="inferred from homology"/>
<feature type="chain" id="PRO_0000188104" description="ATP synthase epsilon chain">
    <location>
        <begin position="1"/>
        <end position="140"/>
    </location>
</feature>
<protein>
    <recommendedName>
        <fullName evidence="1">ATP synthase epsilon chain</fullName>
    </recommendedName>
    <alternativeName>
        <fullName evidence="1">ATP synthase F1 sector epsilon subunit</fullName>
    </alternativeName>
    <alternativeName>
        <fullName evidence="1">F-ATPase epsilon subunit</fullName>
    </alternativeName>
</protein>
<gene>
    <name evidence="1" type="primary">atpC</name>
    <name type="ordered locus">Bd3896</name>
</gene>
<sequence>MNMKLTIVTPEKRILVGQEVDEVTVPAFKGELNILPGHAPLITTLETGVMKWKLKGKEKQDLAVISWGYCQVSPEGVNILANIADLPEEIDLQATKEFLALSEKKIMNELITDEDWAEFQRDWAHARAKIEAAEQQPAKK</sequence>
<keyword id="KW-0066">ATP synthesis</keyword>
<keyword id="KW-0997">Cell inner membrane</keyword>
<keyword id="KW-1003">Cell membrane</keyword>
<keyword id="KW-0139">CF(1)</keyword>
<keyword id="KW-0375">Hydrogen ion transport</keyword>
<keyword id="KW-0406">Ion transport</keyword>
<keyword id="KW-0472">Membrane</keyword>
<keyword id="KW-1185">Reference proteome</keyword>
<keyword id="KW-0813">Transport</keyword>
<organism>
    <name type="scientific">Bdellovibrio bacteriovorus (strain ATCC 15356 / DSM 50701 / NCIMB 9529 / HD100)</name>
    <dbReference type="NCBI Taxonomy" id="264462"/>
    <lineage>
        <taxon>Bacteria</taxon>
        <taxon>Pseudomonadati</taxon>
        <taxon>Bdellovibrionota</taxon>
        <taxon>Bdellovibrionia</taxon>
        <taxon>Bdellovibrionales</taxon>
        <taxon>Pseudobdellovibrionaceae</taxon>
        <taxon>Bdellovibrio</taxon>
    </lineage>
</organism>